<gene>
    <name evidence="1" type="primary">pyrH</name>
    <name type="ordered locus">RSc1406</name>
    <name type="ORF">RS05286</name>
</gene>
<protein>
    <recommendedName>
        <fullName evidence="1">Uridylate kinase</fullName>
        <shortName evidence="1">UK</shortName>
        <ecNumber evidence="1">2.7.4.22</ecNumber>
    </recommendedName>
    <alternativeName>
        <fullName evidence="1">Uridine monophosphate kinase</fullName>
        <shortName evidence="1">UMP kinase</shortName>
        <shortName evidence="1">UMPK</shortName>
    </alternativeName>
</protein>
<name>PYRH_RALN1</name>
<sequence>MPAYKRVLLKLSGEALMGDDAFGINRSTIEGMVNDIAEIVRLGVQVAVVIGGGNIFRGVAGGAAGMDRATADYMGMLATMMNALALQDAMRHANIEGRVQSALRMDQVVEPYIRPRAIRQLEEGKVVIFAAGTGNPFFTTDTAAALRGSEIGAEIVLKATKVDGVYTADPKKDPSATRYTTISFDEAISRNLQVMDATAFALCRDQKLPIKVFSIQKPNALKRVIMGEDEGTLVHV</sequence>
<reference key="1">
    <citation type="journal article" date="2002" name="Nature">
        <title>Genome sequence of the plant pathogen Ralstonia solanacearum.</title>
        <authorList>
            <person name="Salanoubat M."/>
            <person name="Genin S."/>
            <person name="Artiguenave F."/>
            <person name="Gouzy J."/>
            <person name="Mangenot S."/>
            <person name="Arlat M."/>
            <person name="Billault A."/>
            <person name="Brottier P."/>
            <person name="Camus J.-C."/>
            <person name="Cattolico L."/>
            <person name="Chandler M."/>
            <person name="Choisne N."/>
            <person name="Claudel-Renard C."/>
            <person name="Cunnac S."/>
            <person name="Demange N."/>
            <person name="Gaspin C."/>
            <person name="Lavie M."/>
            <person name="Moisan A."/>
            <person name="Robert C."/>
            <person name="Saurin W."/>
            <person name="Schiex T."/>
            <person name="Siguier P."/>
            <person name="Thebault P."/>
            <person name="Whalen M."/>
            <person name="Wincker P."/>
            <person name="Levy M."/>
            <person name="Weissenbach J."/>
            <person name="Boucher C.A."/>
        </authorList>
    </citation>
    <scope>NUCLEOTIDE SEQUENCE [LARGE SCALE GENOMIC DNA]</scope>
    <source>
        <strain>ATCC BAA-1114 / GMI1000</strain>
    </source>
</reference>
<accession>Q8XZI9</accession>
<dbReference type="EC" id="2.7.4.22" evidence="1"/>
<dbReference type="EMBL" id="AL646052">
    <property type="protein sequence ID" value="CAD15108.1"/>
    <property type="molecule type" value="Genomic_DNA"/>
</dbReference>
<dbReference type="RefSeq" id="WP_011001355.1">
    <property type="nucleotide sequence ID" value="NC_003295.1"/>
</dbReference>
<dbReference type="SMR" id="Q8XZI9"/>
<dbReference type="STRING" id="267608.RSc1406"/>
<dbReference type="EnsemblBacteria" id="CAD15108">
    <property type="protein sequence ID" value="CAD15108"/>
    <property type="gene ID" value="RSc1406"/>
</dbReference>
<dbReference type="GeneID" id="93852536"/>
<dbReference type="KEGG" id="rso:RSc1406"/>
<dbReference type="eggNOG" id="COG0528">
    <property type="taxonomic scope" value="Bacteria"/>
</dbReference>
<dbReference type="HOGENOM" id="CLU_033861_0_0_4"/>
<dbReference type="UniPathway" id="UPA00159">
    <property type="reaction ID" value="UER00275"/>
</dbReference>
<dbReference type="Proteomes" id="UP000001436">
    <property type="component" value="Chromosome"/>
</dbReference>
<dbReference type="GO" id="GO:0005829">
    <property type="term" value="C:cytosol"/>
    <property type="evidence" value="ECO:0007669"/>
    <property type="project" value="TreeGrafter"/>
</dbReference>
<dbReference type="GO" id="GO:0005524">
    <property type="term" value="F:ATP binding"/>
    <property type="evidence" value="ECO:0007669"/>
    <property type="project" value="UniProtKB-KW"/>
</dbReference>
<dbReference type="GO" id="GO:0033862">
    <property type="term" value="F:UMP kinase activity"/>
    <property type="evidence" value="ECO:0007669"/>
    <property type="project" value="UniProtKB-EC"/>
</dbReference>
<dbReference type="GO" id="GO:0044210">
    <property type="term" value="P:'de novo' CTP biosynthetic process"/>
    <property type="evidence" value="ECO:0007669"/>
    <property type="project" value="UniProtKB-UniRule"/>
</dbReference>
<dbReference type="GO" id="GO:0006225">
    <property type="term" value="P:UDP biosynthetic process"/>
    <property type="evidence" value="ECO:0007669"/>
    <property type="project" value="TreeGrafter"/>
</dbReference>
<dbReference type="CDD" id="cd04254">
    <property type="entry name" value="AAK_UMPK-PyrH-Ec"/>
    <property type="match status" value="1"/>
</dbReference>
<dbReference type="FunFam" id="3.40.1160.10:FF:000001">
    <property type="entry name" value="Uridylate kinase"/>
    <property type="match status" value="1"/>
</dbReference>
<dbReference type="Gene3D" id="3.40.1160.10">
    <property type="entry name" value="Acetylglutamate kinase-like"/>
    <property type="match status" value="1"/>
</dbReference>
<dbReference type="HAMAP" id="MF_01220_B">
    <property type="entry name" value="PyrH_B"/>
    <property type="match status" value="1"/>
</dbReference>
<dbReference type="InterPro" id="IPR036393">
    <property type="entry name" value="AceGlu_kinase-like_sf"/>
</dbReference>
<dbReference type="InterPro" id="IPR001048">
    <property type="entry name" value="Asp/Glu/Uridylate_kinase"/>
</dbReference>
<dbReference type="InterPro" id="IPR011817">
    <property type="entry name" value="Uridylate_kinase"/>
</dbReference>
<dbReference type="InterPro" id="IPR015963">
    <property type="entry name" value="Uridylate_kinase_bac"/>
</dbReference>
<dbReference type="NCBIfam" id="TIGR02075">
    <property type="entry name" value="pyrH_bact"/>
    <property type="match status" value="1"/>
</dbReference>
<dbReference type="PANTHER" id="PTHR42833">
    <property type="entry name" value="URIDYLATE KINASE"/>
    <property type="match status" value="1"/>
</dbReference>
<dbReference type="PANTHER" id="PTHR42833:SF4">
    <property type="entry name" value="URIDYLATE KINASE PUMPKIN, CHLOROPLASTIC"/>
    <property type="match status" value="1"/>
</dbReference>
<dbReference type="Pfam" id="PF00696">
    <property type="entry name" value="AA_kinase"/>
    <property type="match status" value="1"/>
</dbReference>
<dbReference type="PIRSF" id="PIRSF005650">
    <property type="entry name" value="Uridylate_kin"/>
    <property type="match status" value="1"/>
</dbReference>
<dbReference type="SUPFAM" id="SSF53633">
    <property type="entry name" value="Carbamate kinase-like"/>
    <property type="match status" value="1"/>
</dbReference>
<organism>
    <name type="scientific">Ralstonia nicotianae (strain ATCC BAA-1114 / GMI1000)</name>
    <name type="common">Ralstonia solanacearum</name>
    <dbReference type="NCBI Taxonomy" id="267608"/>
    <lineage>
        <taxon>Bacteria</taxon>
        <taxon>Pseudomonadati</taxon>
        <taxon>Pseudomonadota</taxon>
        <taxon>Betaproteobacteria</taxon>
        <taxon>Burkholderiales</taxon>
        <taxon>Burkholderiaceae</taxon>
        <taxon>Ralstonia</taxon>
        <taxon>Ralstonia solanacearum species complex</taxon>
    </lineage>
</organism>
<proteinExistence type="inferred from homology"/>
<keyword id="KW-0067">ATP-binding</keyword>
<keyword id="KW-0963">Cytoplasm</keyword>
<keyword id="KW-0418">Kinase</keyword>
<keyword id="KW-0547">Nucleotide-binding</keyword>
<keyword id="KW-0665">Pyrimidine biosynthesis</keyword>
<keyword id="KW-1185">Reference proteome</keyword>
<keyword id="KW-0808">Transferase</keyword>
<comment type="function">
    <text evidence="1">Catalyzes the reversible phosphorylation of UMP to UDP.</text>
</comment>
<comment type="catalytic activity">
    <reaction evidence="1">
        <text>UMP + ATP = UDP + ADP</text>
        <dbReference type="Rhea" id="RHEA:24400"/>
        <dbReference type="ChEBI" id="CHEBI:30616"/>
        <dbReference type="ChEBI" id="CHEBI:57865"/>
        <dbReference type="ChEBI" id="CHEBI:58223"/>
        <dbReference type="ChEBI" id="CHEBI:456216"/>
        <dbReference type="EC" id="2.7.4.22"/>
    </reaction>
</comment>
<comment type="activity regulation">
    <text evidence="1">Inhibited by UTP.</text>
</comment>
<comment type="pathway">
    <text evidence="1">Pyrimidine metabolism; CTP biosynthesis via de novo pathway; UDP from UMP (UMPK route): step 1/1.</text>
</comment>
<comment type="subunit">
    <text evidence="1">Homohexamer.</text>
</comment>
<comment type="subcellular location">
    <subcellularLocation>
        <location evidence="1">Cytoplasm</location>
    </subcellularLocation>
</comment>
<comment type="similarity">
    <text evidence="1">Belongs to the UMP kinase family.</text>
</comment>
<evidence type="ECO:0000255" key="1">
    <source>
        <dbReference type="HAMAP-Rule" id="MF_01220"/>
    </source>
</evidence>
<feature type="chain" id="PRO_0000143873" description="Uridylate kinase">
    <location>
        <begin position="1"/>
        <end position="236"/>
    </location>
</feature>
<feature type="binding site" evidence="1">
    <location>
        <begin position="10"/>
        <end position="13"/>
    </location>
    <ligand>
        <name>ATP</name>
        <dbReference type="ChEBI" id="CHEBI:30616"/>
    </ligand>
</feature>
<feature type="binding site" evidence="1">
    <location>
        <position position="52"/>
    </location>
    <ligand>
        <name>UMP</name>
        <dbReference type="ChEBI" id="CHEBI:57865"/>
    </ligand>
</feature>
<feature type="binding site" evidence="1">
    <location>
        <position position="53"/>
    </location>
    <ligand>
        <name>ATP</name>
        <dbReference type="ChEBI" id="CHEBI:30616"/>
    </ligand>
</feature>
<feature type="binding site" evidence="1">
    <location>
        <position position="57"/>
    </location>
    <ligand>
        <name>ATP</name>
        <dbReference type="ChEBI" id="CHEBI:30616"/>
    </ligand>
</feature>
<feature type="binding site" evidence="1">
    <location>
        <position position="72"/>
    </location>
    <ligand>
        <name>UMP</name>
        <dbReference type="ChEBI" id="CHEBI:57865"/>
    </ligand>
</feature>
<feature type="binding site" evidence="1">
    <location>
        <begin position="133"/>
        <end position="140"/>
    </location>
    <ligand>
        <name>UMP</name>
        <dbReference type="ChEBI" id="CHEBI:57865"/>
    </ligand>
</feature>
<feature type="binding site" evidence="1">
    <location>
        <position position="160"/>
    </location>
    <ligand>
        <name>ATP</name>
        <dbReference type="ChEBI" id="CHEBI:30616"/>
    </ligand>
</feature>
<feature type="binding site" evidence="1">
    <location>
        <position position="166"/>
    </location>
    <ligand>
        <name>ATP</name>
        <dbReference type="ChEBI" id="CHEBI:30616"/>
    </ligand>
</feature>
<feature type="binding site" evidence="1">
    <location>
        <position position="169"/>
    </location>
    <ligand>
        <name>ATP</name>
        <dbReference type="ChEBI" id="CHEBI:30616"/>
    </ligand>
</feature>